<proteinExistence type="evidence at transcript level"/>
<sequence>MDHHHHIASRNSSTTSELPSFEPACHNGNGNGWIYDPNQVRYDQSSDQRLSKLTDLVGKHWSIAPPNNPDMNHNLHHHFDHDHSQNDDISMYRQALEVKNEEDLCYNNGSSGGGSLFHDPIESSRSFLDIRLSRPLTDINPSFKPCFKALNVSEFNKKEHQTASLAAVRLGTTNAGKKKRCEEISDEVSKKAKCSEGSTLSPEKELPKAKLRDKITTLQQIVSPFGKTDTASVLQEAITYINFYQEQVKLLSTPYMKNSSMKDPWGGWDREDHNKRGPKHLDLRSRGLCLVPISYTPIAYRDNSATDYWNPTYRGSLYR</sequence>
<accession>Q9FYJ6</accession>
<accession>C0SUY5</accession>
<accession>F4I7V0</accession>
<accession>Q6NNL5</accession>
<feature type="chain" id="PRO_0000358797" description="Transcription factor bHLH111">
    <location>
        <begin position="1"/>
        <end position="319"/>
    </location>
</feature>
<feature type="domain" description="bHLH" evidence="1">
    <location>
        <begin position="195"/>
        <end position="244"/>
    </location>
</feature>
<feature type="region of interest" description="Disordered" evidence="2">
    <location>
        <begin position="1"/>
        <end position="23"/>
    </location>
</feature>
<feature type="compositionally biased region" description="Polar residues" evidence="2">
    <location>
        <begin position="9"/>
        <end position="18"/>
    </location>
</feature>
<feature type="splice variant" id="VSP_036099" description="In isoform 2." evidence="3">
    <location>
        <begin position="1"/>
        <end position="247"/>
    </location>
</feature>
<feature type="splice variant" id="VSP_036100" description="In isoform 2." evidence="3">
    <original>VK</original>
    <variation>MQ</variation>
    <location>
        <begin position="248"/>
        <end position="249"/>
    </location>
</feature>
<evidence type="ECO:0000255" key="1">
    <source>
        <dbReference type="PROSITE-ProRule" id="PRU00981"/>
    </source>
</evidence>
<evidence type="ECO:0000256" key="2">
    <source>
        <dbReference type="SAM" id="MobiDB-lite"/>
    </source>
</evidence>
<evidence type="ECO:0000303" key="3">
    <source ref="3"/>
</evidence>
<evidence type="ECO:0000305" key="4"/>
<name>BH111_ARATH</name>
<protein>
    <recommendedName>
        <fullName>Transcription factor bHLH111</fullName>
    </recommendedName>
    <alternativeName>
        <fullName>Basic helix-loop-helix protein 111</fullName>
        <shortName>AtbHLH111</shortName>
        <shortName>bHLH 111</shortName>
    </alternativeName>
    <alternativeName>
        <fullName>Transcription factor EN 66</fullName>
    </alternativeName>
    <alternativeName>
        <fullName>bHLH transcription factor bHLH111</fullName>
    </alternativeName>
</protein>
<organism>
    <name type="scientific">Arabidopsis thaliana</name>
    <name type="common">Mouse-ear cress</name>
    <dbReference type="NCBI Taxonomy" id="3702"/>
    <lineage>
        <taxon>Eukaryota</taxon>
        <taxon>Viridiplantae</taxon>
        <taxon>Streptophyta</taxon>
        <taxon>Embryophyta</taxon>
        <taxon>Tracheophyta</taxon>
        <taxon>Spermatophyta</taxon>
        <taxon>Magnoliopsida</taxon>
        <taxon>eudicotyledons</taxon>
        <taxon>Gunneridae</taxon>
        <taxon>Pentapetalae</taxon>
        <taxon>rosids</taxon>
        <taxon>malvids</taxon>
        <taxon>Brassicales</taxon>
        <taxon>Brassicaceae</taxon>
        <taxon>Camelineae</taxon>
        <taxon>Arabidopsis</taxon>
    </lineage>
</organism>
<gene>
    <name type="primary">BHLH111</name>
    <name type="synonym">EN66</name>
    <name type="ordered locus">At1g31050</name>
    <name type="ORF">F17F8.3</name>
</gene>
<reference key="1">
    <citation type="journal article" date="2000" name="Nature">
        <title>Sequence and analysis of chromosome 1 of the plant Arabidopsis thaliana.</title>
        <authorList>
            <person name="Theologis A."/>
            <person name="Ecker J.R."/>
            <person name="Palm C.J."/>
            <person name="Federspiel N.A."/>
            <person name="Kaul S."/>
            <person name="White O."/>
            <person name="Alonso J."/>
            <person name="Altafi H."/>
            <person name="Araujo R."/>
            <person name="Bowman C.L."/>
            <person name="Brooks S.Y."/>
            <person name="Buehler E."/>
            <person name="Chan A."/>
            <person name="Chao Q."/>
            <person name="Chen H."/>
            <person name="Cheuk R.F."/>
            <person name="Chin C.W."/>
            <person name="Chung M.K."/>
            <person name="Conn L."/>
            <person name="Conway A.B."/>
            <person name="Conway A.R."/>
            <person name="Creasy T.H."/>
            <person name="Dewar K."/>
            <person name="Dunn P."/>
            <person name="Etgu P."/>
            <person name="Feldblyum T.V."/>
            <person name="Feng J.-D."/>
            <person name="Fong B."/>
            <person name="Fujii C.Y."/>
            <person name="Gill J.E."/>
            <person name="Goldsmith A.D."/>
            <person name="Haas B."/>
            <person name="Hansen N.F."/>
            <person name="Hughes B."/>
            <person name="Huizar L."/>
            <person name="Hunter J.L."/>
            <person name="Jenkins J."/>
            <person name="Johnson-Hopson C."/>
            <person name="Khan S."/>
            <person name="Khaykin E."/>
            <person name="Kim C.J."/>
            <person name="Koo H.L."/>
            <person name="Kremenetskaia I."/>
            <person name="Kurtz D.B."/>
            <person name="Kwan A."/>
            <person name="Lam B."/>
            <person name="Langin-Hooper S."/>
            <person name="Lee A."/>
            <person name="Lee J.M."/>
            <person name="Lenz C.A."/>
            <person name="Li J.H."/>
            <person name="Li Y.-P."/>
            <person name="Lin X."/>
            <person name="Liu S.X."/>
            <person name="Liu Z.A."/>
            <person name="Luros J.S."/>
            <person name="Maiti R."/>
            <person name="Marziali A."/>
            <person name="Militscher J."/>
            <person name="Miranda M."/>
            <person name="Nguyen M."/>
            <person name="Nierman W.C."/>
            <person name="Osborne B.I."/>
            <person name="Pai G."/>
            <person name="Peterson J."/>
            <person name="Pham P.K."/>
            <person name="Rizzo M."/>
            <person name="Rooney T."/>
            <person name="Rowley D."/>
            <person name="Sakano H."/>
            <person name="Salzberg S.L."/>
            <person name="Schwartz J.R."/>
            <person name="Shinn P."/>
            <person name="Southwick A.M."/>
            <person name="Sun H."/>
            <person name="Tallon L.J."/>
            <person name="Tambunga G."/>
            <person name="Toriumi M.J."/>
            <person name="Town C.D."/>
            <person name="Utterback T."/>
            <person name="Van Aken S."/>
            <person name="Vaysberg M."/>
            <person name="Vysotskaia V.S."/>
            <person name="Walker M."/>
            <person name="Wu D."/>
            <person name="Yu G."/>
            <person name="Fraser C.M."/>
            <person name="Venter J.C."/>
            <person name="Davis R.W."/>
        </authorList>
    </citation>
    <scope>NUCLEOTIDE SEQUENCE [LARGE SCALE GENOMIC DNA]</scope>
    <source>
        <strain>cv. Columbia</strain>
    </source>
</reference>
<reference key="2">
    <citation type="journal article" date="2017" name="Plant J.">
        <title>Araport11: a complete reannotation of the Arabidopsis thaliana reference genome.</title>
        <authorList>
            <person name="Cheng C.Y."/>
            <person name="Krishnakumar V."/>
            <person name="Chan A.P."/>
            <person name="Thibaud-Nissen F."/>
            <person name="Schobel S."/>
            <person name="Town C.D."/>
        </authorList>
    </citation>
    <scope>GENOME REANNOTATION</scope>
    <source>
        <strain>cv. Columbia</strain>
    </source>
</reference>
<reference key="3">
    <citation type="submission" date="2004-01" db="EMBL/GenBank/DDBJ databases">
        <title>Arabidopsis ORF clones.</title>
        <authorList>
            <person name="Cheuk R.F."/>
            <person name="Chen H."/>
            <person name="Kim C.J."/>
            <person name="Shinn P."/>
            <person name="Ecker J.R."/>
        </authorList>
    </citation>
    <scope>NUCLEOTIDE SEQUENCE [LARGE SCALE MRNA] (ISOFORM 2)</scope>
    <source>
        <strain>cv. Columbia</strain>
    </source>
</reference>
<reference key="4">
    <citation type="submission" date="2009-03" db="EMBL/GenBank/DDBJ databases">
        <title>ORF cloning and analysis of Arabidopsis transcription factor genes.</title>
        <authorList>
            <person name="Fujita M."/>
            <person name="Mizukado S."/>
            <person name="Seki M."/>
            <person name="Shinozaki K."/>
            <person name="Mitsuda N."/>
            <person name="Takiguchi Y."/>
            <person name="Takagi M."/>
        </authorList>
    </citation>
    <scope>NUCLEOTIDE SEQUENCE [LARGE SCALE MRNA] (ISOFORM 1)</scope>
</reference>
<reference key="5">
    <citation type="journal article" date="2003" name="Mol. Biol. Evol.">
        <title>The basic helix-loop-helix transcription factor family in plants: a genome-wide study of protein structure and functional diversity.</title>
        <authorList>
            <person name="Heim M.A."/>
            <person name="Jakoby M."/>
            <person name="Werber M."/>
            <person name="Martin C."/>
            <person name="Weisshaar B."/>
            <person name="Bailey P.C."/>
        </authorList>
    </citation>
    <scope>GENE FAMILY</scope>
    <scope>NOMENCLATURE</scope>
</reference>
<reference key="6">
    <citation type="journal article" date="2003" name="Plant Cell">
        <title>The Arabidopsis basic/helix-loop-helix transcription factor family.</title>
        <authorList>
            <person name="Toledo-Ortiz G."/>
            <person name="Huq E."/>
            <person name="Quail P.H."/>
        </authorList>
    </citation>
    <scope>GENE FAMILY</scope>
</reference>
<reference key="7">
    <citation type="journal article" date="2003" name="Plant Cell">
        <title>Update on the basic helix-loop-helix transcription factor gene family in Arabidopsis thaliana.</title>
        <authorList>
            <person name="Bailey P.C."/>
            <person name="Martin C."/>
            <person name="Toledo-Ortiz G."/>
            <person name="Quail P.H."/>
            <person name="Huq E."/>
            <person name="Heim M.A."/>
            <person name="Jakoby M."/>
            <person name="Werber M."/>
            <person name="Weisshaar B."/>
        </authorList>
    </citation>
    <scope>GENE FAMILY</scope>
    <scope>NOMENCLATURE</scope>
</reference>
<keyword id="KW-0025">Alternative splicing</keyword>
<keyword id="KW-0238">DNA-binding</keyword>
<keyword id="KW-0539">Nucleus</keyword>
<keyword id="KW-1185">Reference proteome</keyword>
<keyword id="KW-0804">Transcription</keyword>
<keyword id="KW-0805">Transcription regulation</keyword>
<comment type="subunit">
    <text evidence="4">Homodimer.</text>
</comment>
<comment type="subcellular location">
    <subcellularLocation>
        <location evidence="1">Nucleus</location>
    </subcellularLocation>
</comment>
<comment type="alternative products">
    <event type="alternative splicing"/>
    <isoform>
        <id>Q9FYJ6-1</id>
        <name>1</name>
        <sequence type="displayed"/>
    </isoform>
    <isoform>
        <id>Q9FYJ6-2</id>
        <name>2</name>
        <sequence type="described" ref="VSP_036099 VSP_036100"/>
    </isoform>
</comment>
<comment type="miscellaneous">
    <molecule>Isoform 2</molecule>
    <text evidence="4">May be due to intron retention.</text>
</comment>
<comment type="sequence caution" evidence="4">
    <conflict type="erroneous gene model prediction">
        <sequence resource="EMBL-CDS" id="AEE31309"/>
    </conflict>
    <text>The predicted gene has been split into 2 genes: At1g31050 and At1g31060.</text>
</comment>
<dbReference type="EMBL" id="AC000107">
    <property type="protein sequence ID" value="AAF98179.1"/>
    <property type="molecule type" value="Genomic_DNA"/>
</dbReference>
<dbReference type="EMBL" id="CP002684">
    <property type="protein sequence ID" value="AEE31309.1"/>
    <property type="status" value="ALT_SEQ"/>
    <property type="molecule type" value="Genomic_DNA"/>
</dbReference>
<dbReference type="EMBL" id="BT010791">
    <property type="protein sequence ID" value="AAR24158.1"/>
    <property type="molecule type" value="mRNA"/>
</dbReference>
<dbReference type="EMBL" id="BT011271">
    <property type="protein sequence ID" value="AAR92307.1"/>
    <property type="molecule type" value="mRNA"/>
</dbReference>
<dbReference type="EMBL" id="AB493488">
    <property type="protein sequence ID" value="BAH30326.1"/>
    <property type="molecule type" value="mRNA"/>
</dbReference>
<dbReference type="PIR" id="A86436">
    <property type="entry name" value="A86436"/>
</dbReference>
<dbReference type="SMR" id="Q9FYJ6"/>
<dbReference type="IntAct" id="Q9FYJ6">
    <property type="interactions" value="7"/>
</dbReference>
<dbReference type="STRING" id="3702.Q9FYJ6"/>
<dbReference type="PaxDb" id="3702-AT1G31050.1"/>
<dbReference type="PeptideAtlas" id="Q9FYJ6"/>
<dbReference type="Araport" id="AT1G31050"/>
<dbReference type="TAIR" id="AT1G31050"/>
<dbReference type="eggNOG" id="ENOG502QPTJ">
    <property type="taxonomic scope" value="Eukaryota"/>
</dbReference>
<dbReference type="HOGENOM" id="CLU_043465_1_0_1"/>
<dbReference type="InParanoid" id="Q9FYJ6"/>
<dbReference type="PhylomeDB" id="Q9FYJ6"/>
<dbReference type="PRO" id="PR:Q9FYJ6"/>
<dbReference type="Proteomes" id="UP000006548">
    <property type="component" value="Chromosome 1"/>
</dbReference>
<dbReference type="ExpressionAtlas" id="Q9FYJ6">
    <property type="expression patterns" value="baseline and differential"/>
</dbReference>
<dbReference type="GO" id="GO:0005634">
    <property type="term" value="C:nucleus"/>
    <property type="evidence" value="ECO:0000318"/>
    <property type="project" value="GO_Central"/>
</dbReference>
<dbReference type="GO" id="GO:0000981">
    <property type="term" value="F:DNA-binding transcription factor activity, RNA polymerase II-specific"/>
    <property type="evidence" value="ECO:0000318"/>
    <property type="project" value="GO_Central"/>
</dbReference>
<dbReference type="GO" id="GO:0046983">
    <property type="term" value="F:protein dimerization activity"/>
    <property type="evidence" value="ECO:0007669"/>
    <property type="project" value="InterPro"/>
</dbReference>
<dbReference type="GO" id="GO:0000978">
    <property type="term" value="F:RNA polymerase II cis-regulatory region sequence-specific DNA binding"/>
    <property type="evidence" value="ECO:0000318"/>
    <property type="project" value="GO_Central"/>
</dbReference>
<dbReference type="GO" id="GO:0006357">
    <property type="term" value="P:regulation of transcription by RNA polymerase II"/>
    <property type="evidence" value="ECO:0000318"/>
    <property type="project" value="GO_Central"/>
</dbReference>
<dbReference type="CDD" id="cd11393">
    <property type="entry name" value="bHLH_AtbHLH_like"/>
    <property type="match status" value="1"/>
</dbReference>
<dbReference type="Gene3D" id="4.10.280.10">
    <property type="entry name" value="Helix-loop-helix DNA-binding domain"/>
    <property type="match status" value="1"/>
</dbReference>
<dbReference type="InterPro" id="IPR045239">
    <property type="entry name" value="bHLH95_bHLH"/>
</dbReference>
<dbReference type="InterPro" id="IPR011598">
    <property type="entry name" value="bHLH_dom"/>
</dbReference>
<dbReference type="InterPro" id="IPR036638">
    <property type="entry name" value="HLH_DNA-bd_sf"/>
</dbReference>
<dbReference type="InterPro" id="IPR045843">
    <property type="entry name" value="IND-like"/>
</dbReference>
<dbReference type="PANTHER" id="PTHR16223:SF383">
    <property type="entry name" value="TRANSCRIPTION FACTOR BHLH111"/>
    <property type="match status" value="1"/>
</dbReference>
<dbReference type="PANTHER" id="PTHR16223">
    <property type="entry name" value="TRANSCRIPTION FACTOR BHLH83-RELATED"/>
    <property type="match status" value="1"/>
</dbReference>
<dbReference type="SUPFAM" id="SSF47459">
    <property type="entry name" value="HLH, helix-loop-helix DNA-binding domain"/>
    <property type="match status" value="1"/>
</dbReference>
<dbReference type="PROSITE" id="PS50888">
    <property type="entry name" value="BHLH"/>
    <property type="match status" value="1"/>
</dbReference>